<evidence type="ECO:0000255" key="1">
    <source>
        <dbReference type="HAMAP-Rule" id="MF_00187"/>
    </source>
</evidence>
<keyword id="KW-0963">Cytoplasm</keyword>
<keyword id="KW-0501">Molybdenum cofactor biosynthesis</keyword>
<name>FDHD_ACIAD</name>
<sequence>MDSLTETTNALSNDTHAQGYQSVSTTRHVGHIREVVYDCVVEEFPVALIYNGISHAVMMTTPLDLEVFAIGFSLTEAIIDHPRQIYDIEIIKSDLGIQVEITIASEAFIKLKTHRRTLAGQTGCGICGIESLQQIQHTFPPVTHDFFVHWLDQIPDAMVQLQQQQPISAVTGGAHAAAWVVNGNILTVFEDVGRHNALDKLLGHLVKHDIDRSQGFVLMTSRASYELVKKCAQLNISLLATISAPTSLAIELAKRSGLKLASFCRQSRYVVYS</sequence>
<comment type="function">
    <text evidence="1">Required for formate dehydrogenase (FDH) activity. Acts as a sulfur carrier protein that transfers sulfur from IscS to the molybdenum cofactor prior to its insertion into FDH.</text>
</comment>
<comment type="subcellular location">
    <subcellularLocation>
        <location evidence="1">Cytoplasm</location>
    </subcellularLocation>
</comment>
<comment type="similarity">
    <text evidence="1">Belongs to the FdhD family.</text>
</comment>
<reference key="1">
    <citation type="journal article" date="2004" name="Nucleic Acids Res.">
        <title>Unique features revealed by the genome sequence of Acinetobacter sp. ADP1, a versatile and naturally transformation competent bacterium.</title>
        <authorList>
            <person name="Barbe V."/>
            <person name="Vallenet D."/>
            <person name="Fonknechten N."/>
            <person name="Kreimeyer A."/>
            <person name="Oztas S."/>
            <person name="Labarre L."/>
            <person name="Cruveiller S."/>
            <person name="Robert C."/>
            <person name="Duprat S."/>
            <person name="Wincker P."/>
            <person name="Ornston L.N."/>
            <person name="Weissenbach J."/>
            <person name="Marliere P."/>
            <person name="Cohen G.N."/>
            <person name="Medigue C."/>
        </authorList>
    </citation>
    <scope>NUCLEOTIDE SEQUENCE [LARGE SCALE GENOMIC DNA]</scope>
    <source>
        <strain>ATCC 33305 / BD413 / ADP1</strain>
    </source>
</reference>
<accession>Q6FB19</accession>
<gene>
    <name evidence="1" type="primary">fdhD</name>
    <name type="ordered locus">ACIAD1916</name>
</gene>
<proteinExistence type="inferred from homology"/>
<feature type="chain" id="PRO_0000152884" description="Sulfur carrier protein FdhD">
    <location>
        <begin position="1"/>
        <end position="273"/>
    </location>
</feature>
<feature type="active site" description="Cysteine persulfide intermediate" evidence="1">
    <location>
        <position position="124"/>
    </location>
</feature>
<feature type="binding site" evidence="1">
    <location>
        <begin position="263"/>
        <end position="268"/>
    </location>
    <ligand>
        <name>Mo-bis(molybdopterin guanine dinucleotide)</name>
        <dbReference type="ChEBI" id="CHEBI:60539"/>
    </ligand>
</feature>
<organism>
    <name type="scientific">Acinetobacter baylyi (strain ATCC 33305 / BD413 / ADP1)</name>
    <dbReference type="NCBI Taxonomy" id="62977"/>
    <lineage>
        <taxon>Bacteria</taxon>
        <taxon>Pseudomonadati</taxon>
        <taxon>Pseudomonadota</taxon>
        <taxon>Gammaproteobacteria</taxon>
        <taxon>Moraxellales</taxon>
        <taxon>Moraxellaceae</taxon>
        <taxon>Acinetobacter</taxon>
    </lineage>
</organism>
<protein>
    <recommendedName>
        <fullName evidence="1">Sulfur carrier protein FdhD</fullName>
    </recommendedName>
</protein>
<dbReference type="EMBL" id="CR543861">
    <property type="protein sequence ID" value="CAG68744.1"/>
    <property type="molecule type" value="Genomic_DNA"/>
</dbReference>
<dbReference type="RefSeq" id="WP_011182374.1">
    <property type="nucleotide sequence ID" value="NC_005966.1"/>
</dbReference>
<dbReference type="SMR" id="Q6FB19"/>
<dbReference type="STRING" id="202950.GCA_001485005_00447"/>
<dbReference type="GeneID" id="45234284"/>
<dbReference type="KEGG" id="aci:ACIAD1916"/>
<dbReference type="eggNOG" id="COG1526">
    <property type="taxonomic scope" value="Bacteria"/>
</dbReference>
<dbReference type="HOGENOM" id="CLU_056887_2_0_6"/>
<dbReference type="OrthoDB" id="3197277at2"/>
<dbReference type="BioCyc" id="ASP62977:ACIAD_RS08825-MONOMER"/>
<dbReference type="Proteomes" id="UP000000430">
    <property type="component" value="Chromosome"/>
</dbReference>
<dbReference type="GO" id="GO:0005737">
    <property type="term" value="C:cytoplasm"/>
    <property type="evidence" value="ECO:0007669"/>
    <property type="project" value="UniProtKB-SubCell"/>
</dbReference>
<dbReference type="GO" id="GO:0097163">
    <property type="term" value="F:sulfur carrier activity"/>
    <property type="evidence" value="ECO:0007669"/>
    <property type="project" value="UniProtKB-UniRule"/>
</dbReference>
<dbReference type="GO" id="GO:0016783">
    <property type="term" value="F:sulfurtransferase activity"/>
    <property type="evidence" value="ECO:0007669"/>
    <property type="project" value="InterPro"/>
</dbReference>
<dbReference type="GO" id="GO:0006777">
    <property type="term" value="P:Mo-molybdopterin cofactor biosynthetic process"/>
    <property type="evidence" value="ECO:0007669"/>
    <property type="project" value="UniProtKB-UniRule"/>
</dbReference>
<dbReference type="Gene3D" id="3.10.20.10">
    <property type="match status" value="1"/>
</dbReference>
<dbReference type="Gene3D" id="3.40.140.10">
    <property type="entry name" value="Cytidine Deaminase, domain 2"/>
    <property type="match status" value="1"/>
</dbReference>
<dbReference type="HAMAP" id="MF_00187">
    <property type="entry name" value="FdhD"/>
    <property type="match status" value="1"/>
</dbReference>
<dbReference type="InterPro" id="IPR016193">
    <property type="entry name" value="Cytidine_deaminase-like"/>
</dbReference>
<dbReference type="InterPro" id="IPR003786">
    <property type="entry name" value="FdhD"/>
</dbReference>
<dbReference type="NCBIfam" id="TIGR00129">
    <property type="entry name" value="fdhD_narQ"/>
    <property type="match status" value="1"/>
</dbReference>
<dbReference type="PANTHER" id="PTHR30592">
    <property type="entry name" value="FORMATE DEHYDROGENASE"/>
    <property type="match status" value="1"/>
</dbReference>
<dbReference type="PANTHER" id="PTHR30592:SF1">
    <property type="entry name" value="SULFUR CARRIER PROTEIN FDHD"/>
    <property type="match status" value="1"/>
</dbReference>
<dbReference type="Pfam" id="PF02634">
    <property type="entry name" value="FdhD-NarQ"/>
    <property type="match status" value="1"/>
</dbReference>
<dbReference type="PIRSF" id="PIRSF015626">
    <property type="entry name" value="FdhD"/>
    <property type="match status" value="1"/>
</dbReference>
<dbReference type="SUPFAM" id="SSF53927">
    <property type="entry name" value="Cytidine deaminase-like"/>
    <property type="match status" value="1"/>
</dbReference>